<evidence type="ECO:0000255" key="1"/>
<evidence type="ECO:0000305" key="2"/>
<organism>
    <name type="scientific">Ostreococcus tauri</name>
    <dbReference type="NCBI Taxonomy" id="70448"/>
    <lineage>
        <taxon>Eukaryota</taxon>
        <taxon>Viridiplantae</taxon>
        <taxon>Chlorophyta</taxon>
        <taxon>Mamiellophyceae</taxon>
        <taxon>Mamiellales</taxon>
        <taxon>Bathycoccaceae</taxon>
        <taxon>Ostreococcus</taxon>
    </lineage>
</organism>
<sequence>MENSIGLGLIHGLMYGIVPVAPWFVALKRYLLEGKEKGQLAVAGTIAGQVTLLALTFFGWSRVLWVWYYFEPALIILGTMAVVRCALDCWVEQESSLRTAALGPGAGQLASKQEGLYYFLMSFGLMFCNPLHLEGSQTLLSSIPGNRYVYLLAFTVSYTAIIFIFWVTLGYRIFGKAYSGFGAQQTLNRYRIRRVSVGIVAALFLQFANCTPEALVIYHWDSLLAYTPFDGLKHHRTRGYTWEPSSDNAFELSRQSYRATNRAGVSFEQGAKRAVQFKPFWNTETRFDECNQVRERELSNEDWNAEATFHEFQGINQGVLRARSVPFNLYMVPNWEKQEDKNYLLTLRQIRDEMDDKLMAESSPQERFLVSPFTDNLDYEVDYQVYPELMAEKAQTKTAYADMVKLIRGTKWTSNHVHLGDGTDVEMSYAKLHALPAEVRLPWHYPVVKPTEVVVQTSSTDTPDSVQLLNDELQENLHFFSNEPERIQQNVYKRLWEHRTFGKVTPRMIDDKVQKRLDDRVNMRREAYVSSNPTKAK</sequence>
<reference key="1">
    <citation type="journal article" date="2007" name="Mol. Biol. Evol.">
        <title>The complete chloroplast and mitochondrial DNA sequence of Ostreococcus tauri: organelle genomes of the smallest eukaryote are examples of compaction.</title>
        <authorList>
            <person name="Robbens S."/>
            <person name="Derelle E."/>
            <person name="Ferraz C."/>
            <person name="Wuyts J."/>
            <person name="Moreau H."/>
            <person name="Van de Peer Y."/>
        </authorList>
    </citation>
    <scope>NUCLEOTIDE SEQUENCE [LARGE SCALE GENOMIC DNA]</scope>
    <source>
        <strain>OTTH0595</strain>
    </source>
</reference>
<name>YCX2_OSTTA</name>
<dbReference type="EMBL" id="CR954199">
    <property type="protein sequence ID" value="CAL36331.1"/>
    <property type="molecule type" value="Genomic_DNA"/>
</dbReference>
<dbReference type="KEGG" id="ota:OstapCp06"/>
<dbReference type="InParanoid" id="Q0P3P6"/>
<dbReference type="Proteomes" id="UP000009170">
    <property type="component" value="Chloroplast"/>
</dbReference>
<dbReference type="GO" id="GO:0031969">
    <property type="term" value="C:chloroplast membrane"/>
    <property type="evidence" value="ECO:0007669"/>
    <property type="project" value="UniProtKB-SubCell"/>
</dbReference>
<protein>
    <recommendedName>
        <fullName>Uncharacterized membrane protein OtCpg00060</fullName>
    </recommendedName>
    <alternativeName>
        <fullName>ORF537</fullName>
    </alternativeName>
</protein>
<gene>
    <name type="ordered locus">OtCpg00060</name>
</gene>
<feature type="chain" id="PRO_0000361001" description="Uncharacterized membrane protein OtCpg00060">
    <location>
        <begin position="1"/>
        <end position="537"/>
    </location>
</feature>
<feature type="transmembrane region" description="Helical" evidence="1">
    <location>
        <begin position="5"/>
        <end position="25"/>
    </location>
</feature>
<feature type="transmembrane region" description="Helical" evidence="1">
    <location>
        <begin position="40"/>
        <end position="60"/>
    </location>
</feature>
<feature type="transmembrane region" description="Helical" evidence="1">
    <location>
        <begin position="63"/>
        <end position="83"/>
    </location>
</feature>
<feature type="transmembrane region" description="Helical" evidence="1">
    <location>
        <begin position="115"/>
        <end position="135"/>
    </location>
</feature>
<feature type="transmembrane region" description="Helical" evidence="1">
    <location>
        <begin position="149"/>
        <end position="169"/>
    </location>
</feature>
<feature type="transmembrane region" description="Helical" evidence="1">
    <location>
        <begin position="197"/>
        <end position="217"/>
    </location>
</feature>
<accession>Q0P3P6</accession>
<proteinExistence type="predicted"/>
<comment type="subcellular location">
    <subcellularLocation>
        <location evidence="2">Plastid</location>
        <location evidence="2">Chloroplast membrane</location>
        <topology evidence="2">Multi-pass membrane protein</topology>
    </subcellularLocation>
</comment>
<keyword id="KW-0150">Chloroplast</keyword>
<keyword id="KW-0472">Membrane</keyword>
<keyword id="KW-0934">Plastid</keyword>
<keyword id="KW-1185">Reference proteome</keyword>
<keyword id="KW-0812">Transmembrane</keyword>
<keyword id="KW-1133">Transmembrane helix</keyword>
<geneLocation type="chloroplast"/>